<sequence>MEVILLERVAKLGQMGELVRVKDGFARNFLLPRGKALRATAANREKYEHMKADLEARNIAAKAEATKVAEKIDGQNVVVIRQASEGGQLFGSVSVRDIIASFDGQGVKIDRSQVLLDAPIKTIGKHSIQVAVHPEVEVAVSVTVARSAEEAERINRGEDISTRREDEDAAAEALAAAGEFFDPDAQFGEEQPTEE</sequence>
<proteinExistence type="inferred from homology"/>
<evidence type="ECO:0000255" key="1">
    <source>
        <dbReference type="HAMAP-Rule" id="MF_00503"/>
    </source>
</evidence>
<evidence type="ECO:0000305" key="2"/>
<reference key="1">
    <citation type="submission" date="2008-05" db="EMBL/GenBank/DDBJ databases">
        <title>Complete sequence of Rhodopseudomonas palustris TIE-1.</title>
        <authorList>
            <consortium name="US DOE Joint Genome Institute"/>
            <person name="Lucas S."/>
            <person name="Copeland A."/>
            <person name="Lapidus A."/>
            <person name="Glavina del Rio T."/>
            <person name="Dalin E."/>
            <person name="Tice H."/>
            <person name="Pitluck S."/>
            <person name="Chain P."/>
            <person name="Malfatti S."/>
            <person name="Shin M."/>
            <person name="Vergez L."/>
            <person name="Lang D."/>
            <person name="Schmutz J."/>
            <person name="Larimer F."/>
            <person name="Land M."/>
            <person name="Hauser L."/>
            <person name="Kyrpides N."/>
            <person name="Mikhailova N."/>
            <person name="Emerson D."/>
            <person name="Newman D.K."/>
            <person name="Roden E."/>
            <person name="Richardson P."/>
        </authorList>
    </citation>
    <scope>NUCLEOTIDE SEQUENCE [LARGE SCALE GENOMIC DNA]</scope>
    <source>
        <strain>TIE-1</strain>
    </source>
</reference>
<gene>
    <name evidence="1" type="primary">rplI</name>
    <name type="ordered locus">Rpal_3490</name>
</gene>
<accession>B3Q9T8</accession>
<dbReference type="EMBL" id="CP001096">
    <property type="protein sequence ID" value="ACF01991.1"/>
    <property type="molecule type" value="Genomic_DNA"/>
</dbReference>
<dbReference type="RefSeq" id="WP_011158625.1">
    <property type="nucleotide sequence ID" value="NC_011004.1"/>
</dbReference>
<dbReference type="SMR" id="B3Q9T8"/>
<dbReference type="GeneID" id="66894162"/>
<dbReference type="KEGG" id="rpt:Rpal_3490"/>
<dbReference type="HOGENOM" id="CLU_078938_1_0_5"/>
<dbReference type="OrthoDB" id="9788336at2"/>
<dbReference type="Proteomes" id="UP000001725">
    <property type="component" value="Chromosome"/>
</dbReference>
<dbReference type="GO" id="GO:1990904">
    <property type="term" value="C:ribonucleoprotein complex"/>
    <property type="evidence" value="ECO:0007669"/>
    <property type="project" value="UniProtKB-KW"/>
</dbReference>
<dbReference type="GO" id="GO:0005840">
    <property type="term" value="C:ribosome"/>
    <property type="evidence" value="ECO:0007669"/>
    <property type="project" value="UniProtKB-KW"/>
</dbReference>
<dbReference type="GO" id="GO:0019843">
    <property type="term" value="F:rRNA binding"/>
    <property type="evidence" value="ECO:0007669"/>
    <property type="project" value="UniProtKB-UniRule"/>
</dbReference>
<dbReference type="GO" id="GO:0003735">
    <property type="term" value="F:structural constituent of ribosome"/>
    <property type="evidence" value="ECO:0007669"/>
    <property type="project" value="InterPro"/>
</dbReference>
<dbReference type="GO" id="GO:0006412">
    <property type="term" value="P:translation"/>
    <property type="evidence" value="ECO:0007669"/>
    <property type="project" value="UniProtKB-UniRule"/>
</dbReference>
<dbReference type="Gene3D" id="3.10.430.100">
    <property type="entry name" value="Ribosomal protein L9, C-terminal domain"/>
    <property type="match status" value="1"/>
</dbReference>
<dbReference type="Gene3D" id="3.40.5.10">
    <property type="entry name" value="Ribosomal protein L9, N-terminal domain"/>
    <property type="match status" value="1"/>
</dbReference>
<dbReference type="HAMAP" id="MF_00503">
    <property type="entry name" value="Ribosomal_bL9"/>
    <property type="match status" value="1"/>
</dbReference>
<dbReference type="InterPro" id="IPR000244">
    <property type="entry name" value="Ribosomal_bL9"/>
</dbReference>
<dbReference type="InterPro" id="IPR009027">
    <property type="entry name" value="Ribosomal_bL9/RNase_H1_N"/>
</dbReference>
<dbReference type="InterPro" id="IPR020594">
    <property type="entry name" value="Ribosomal_bL9_bac/chp"/>
</dbReference>
<dbReference type="InterPro" id="IPR020069">
    <property type="entry name" value="Ribosomal_bL9_C"/>
</dbReference>
<dbReference type="InterPro" id="IPR036791">
    <property type="entry name" value="Ribosomal_bL9_C_sf"/>
</dbReference>
<dbReference type="InterPro" id="IPR020070">
    <property type="entry name" value="Ribosomal_bL9_N"/>
</dbReference>
<dbReference type="InterPro" id="IPR036935">
    <property type="entry name" value="Ribosomal_bL9_N_sf"/>
</dbReference>
<dbReference type="NCBIfam" id="TIGR00158">
    <property type="entry name" value="L9"/>
    <property type="match status" value="1"/>
</dbReference>
<dbReference type="PANTHER" id="PTHR21368">
    <property type="entry name" value="50S RIBOSOMAL PROTEIN L9"/>
    <property type="match status" value="1"/>
</dbReference>
<dbReference type="Pfam" id="PF03948">
    <property type="entry name" value="Ribosomal_L9_C"/>
    <property type="match status" value="1"/>
</dbReference>
<dbReference type="Pfam" id="PF01281">
    <property type="entry name" value="Ribosomal_L9_N"/>
    <property type="match status" value="1"/>
</dbReference>
<dbReference type="SUPFAM" id="SSF55658">
    <property type="entry name" value="L9 N-domain-like"/>
    <property type="match status" value="1"/>
</dbReference>
<dbReference type="SUPFAM" id="SSF55653">
    <property type="entry name" value="Ribosomal protein L9 C-domain"/>
    <property type="match status" value="1"/>
</dbReference>
<dbReference type="PROSITE" id="PS00651">
    <property type="entry name" value="RIBOSOMAL_L9"/>
    <property type="match status" value="1"/>
</dbReference>
<name>RL9_RHOPT</name>
<organism>
    <name type="scientific">Rhodopseudomonas palustris (strain TIE-1)</name>
    <dbReference type="NCBI Taxonomy" id="395960"/>
    <lineage>
        <taxon>Bacteria</taxon>
        <taxon>Pseudomonadati</taxon>
        <taxon>Pseudomonadota</taxon>
        <taxon>Alphaproteobacteria</taxon>
        <taxon>Hyphomicrobiales</taxon>
        <taxon>Nitrobacteraceae</taxon>
        <taxon>Rhodopseudomonas</taxon>
    </lineage>
</organism>
<comment type="function">
    <text evidence="1">Binds to the 23S rRNA.</text>
</comment>
<comment type="similarity">
    <text evidence="1">Belongs to the bacterial ribosomal protein bL9 family.</text>
</comment>
<keyword id="KW-0687">Ribonucleoprotein</keyword>
<keyword id="KW-0689">Ribosomal protein</keyword>
<keyword id="KW-0694">RNA-binding</keyword>
<keyword id="KW-0699">rRNA-binding</keyword>
<feature type="chain" id="PRO_1000126962" description="Large ribosomal subunit protein bL9">
    <location>
        <begin position="1"/>
        <end position="195"/>
    </location>
</feature>
<protein>
    <recommendedName>
        <fullName evidence="1">Large ribosomal subunit protein bL9</fullName>
    </recommendedName>
    <alternativeName>
        <fullName evidence="2">50S ribosomal protein L9</fullName>
    </alternativeName>
</protein>